<sequence length="200" mass="20451">MIASVRGEVLEIALDHAVIESAGVGYRVNATPATLGGLQRGSEARLVTAMIVREDSMTLYGFPDSESKELFGLLQTVSGVGPRLAMATLAVLEPDALRAALAEGNVTALTRVPGIGKRGAERMVVELRDKVDAVASTSGAVPLGAGGGGSVRDQIVEALVGLGFPAKQAEQAADSVLAEAPESTTSTALRSALSLLGKTR</sequence>
<organism>
    <name type="scientific">Rhodococcus jostii (strain RHA1)</name>
    <dbReference type="NCBI Taxonomy" id="101510"/>
    <lineage>
        <taxon>Bacteria</taxon>
        <taxon>Bacillati</taxon>
        <taxon>Actinomycetota</taxon>
        <taxon>Actinomycetes</taxon>
        <taxon>Mycobacteriales</taxon>
        <taxon>Nocardiaceae</taxon>
        <taxon>Rhodococcus</taxon>
    </lineage>
</organism>
<proteinExistence type="inferred from homology"/>
<feature type="chain" id="PRO_1000002534" description="Holliday junction branch migration complex subunit RuvA">
    <location>
        <begin position="1"/>
        <end position="200"/>
    </location>
</feature>
<feature type="region of interest" description="Domain I" evidence="1">
    <location>
        <begin position="1"/>
        <end position="63"/>
    </location>
</feature>
<feature type="region of interest" description="Domain II" evidence="1">
    <location>
        <begin position="64"/>
        <end position="142"/>
    </location>
</feature>
<feature type="region of interest" description="Flexible linker" evidence="1">
    <location>
        <begin position="142"/>
        <end position="146"/>
    </location>
</feature>
<feature type="region of interest" description="Domain III" evidence="1">
    <location>
        <begin position="147"/>
        <end position="200"/>
    </location>
</feature>
<name>RUVA_RHOJR</name>
<dbReference type="EMBL" id="CP000431">
    <property type="protein sequence ID" value="ABG98659.1"/>
    <property type="molecule type" value="Genomic_DNA"/>
</dbReference>
<dbReference type="RefSeq" id="WP_009480136.1">
    <property type="nucleotide sequence ID" value="NC_008268.1"/>
</dbReference>
<dbReference type="SMR" id="Q0S1C7"/>
<dbReference type="KEGG" id="rha:RHA1_ro06893"/>
<dbReference type="eggNOG" id="COG0632">
    <property type="taxonomic scope" value="Bacteria"/>
</dbReference>
<dbReference type="HOGENOM" id="CLU_087936_2_1_11"/>
<dbReference type="OrthoDB" id="5293449at2"/>
<dbReference type="Proteomes" id="UP000008710">
    <property type="component" value="Chromosome"/>
</dbReference>
<dbReference type="GO" id="GO:0005737">
    <property type="term" value="C:cytoplasm"/>
    <property type="evidence" value="ECO:0007669"/>
    <property type="project" value="UniProtKB-SubCell"/>
</dbReference>
<dbReference type="GO" id="GO:0009379">
    <property type="term" value="C:Holliday junction helicase complex"/>
    <property type="evidence" value="ECO:0007669"/>
    <property type="project" value="InterPro"/>
</dbReference>
<dbReference type="GO" id="GO:0048476">
    <property type="term" value="C:Holliday junction resolvase complex"/>
    <property type="evidence" value="ECO:0007669"/>
    <property type="project" value="UniProtKB-UniRule"/>
</dbReference>
<dbReference type="GO" id="GO:0005524">
    <property type="term" value="F:ATP binding"/>
    <property type="evidence" value="ECO:0007669"/>
    <property type="project" value="InterPro"/>
</dbReference>
<dbReference type="GO" id="GO:0000400">
    <property type="term" value="F:four-way junction DNA binding"/>
    <property type="evidence" value="ECO:0007669"/>
    <property type="project" value="UniProtKB-UniRule"/>
</dbReference>
<dbReference type="GO" id="GO:0009378">
    <property type="term" value="F:four-way junction helicase activity"/>
    <property type="evidence" value="ECO:0007669"/>
    <property type="project" value="InterPro"/>
</dbReference>
<dbReference type="GO" id="GO:0006310">
    <property type="term" value="P:DNA recombination"/>
    <property type="evidence" value="ECO:0007669"/>
    <property type="project" value="UniProtKB-UniRule"/>
</dbReference>
<dbReference type="GO" id="GO:0006281">
    <property type="term" value="P:DNA repair"/>
    <property type="evidence" value="ECO:0007669"/>
    <property type="project" value="UniProtKB-UniRule"/>
</dbReference>
<dbReference type="CDD" id="cd14332">
    <property type="entry name" value="UBA_RuvA_C"/>
    <property type="match status" value="1"/>
</dbReference>
<dbReference type="FunFam" id="2.40.50.140:FF:000083">
    <property type="entry name" value="Holliday junction ATP-dependent DNA helicase RuvA"/>
    <property type="match status" value="1"/>
</dbReference>
<dbReference type="Gene3D" id="1.10.150.20">
    <property type="entry name" value="5' to 3' exonuclease, C-terminal subdomain"/>
    <property type="match status" value="1"/>
</dbReference>
<dbReference type="Gene3D" id="1.10.8.10">
    <property type="entry name" value="DNA helicase RuvA subunit, C-terminal domain"/>
    <property type="match status" value="1"/>
</dbReference>
<dbReference type="Gene3D" id="2.40.50.140">
    <property type="entry name" value="Nucleic acid-binding proteins"/>
    <property type="match status" value="1"/>
</dbReference>
<dbReference type="HAMAP" id="MF_00031">
    <property type="entry name" value="DNA_HJ_migration_RuvA"/>
    <property type="match status" value="1"/>
</dbReference>
<dbReference type="InterPro" id="IPR013849">
    <property type="entry name" value="DNA_helicase_Holl-junc_RuvA_I"/>
</dbReference>
<dbReference type="InterPro" id="IPR012340">
    <property type="entry name" value="NA-bd_OB-fold"/>
</dbReference>
<dbReference type="InterPro" id="IPR000085">
    <property type="entry name" value="RuvA"/>
</dbReference>
<dbReference type="InterPro" id="IPR010994">
    <property type="entry name" value="RuvA_2-like"/>
</dbReference>
<dbReference type="InterPro" id="IPR011114">
    <property type="entry name" value="RuvA_C"/>
</dbReference>
<dbReference type="InterPro" id="IPR036267">
    <property type="entry name" value="RuvA_C_sf"/>
</dbReference>
<dbReference type="NCBIfam" id="TIGR00084">
    <property type="entry name" value="ruvA"/>
    <property type="match status" value="1"/>
</dbReference>
<dbReference type="Pfam" id="PF14520">
    <property type="entry name" value="HHH_5"/>
    <property type="match status" value="1"/>
</dbReference>
<dbReference type="Pfam" id="PF07499">
    <property type="entry name" value="RuvA_C"/>
    <property type="match status" value="1"/>
</dbReference>
<dbReference type="Pfam" id="PF01330">
    <property type="entry name" value="RuvA_N"/>
    <property type="match status" value="1"/>
</dbReference>
<dbReference type="SUPFAM" id="SSF46929">
    <property type="entry name" value="DNA helicase RuvA subunit, C-terminal domain"/>
    <property type="match status" value="1"/>
</dbReference>
<dbReference type="SUPFAM" id="SSF50249">
    <property type="entry name" value="Nucleic acid-binding proteins"/>
    <property type="match status" value="1"/>
</dbReference>
<dbReference type="SUPFAM" id="SSF47781">
    <property type="entry name" value="RuvA domain 2-like"/>
    <property type="match status" value="1"/>
</dbReference>
<keyword id="KW-0963">Cytoplasm</keyword>
<keyword id="KW-0227">DNA damage</keyword>
<keyword id="KW-0233">DNA recombination</keyword>
<keyword id="KW-0234">DNA repair</keyword>
<keyword id="KW-0238">DNA-binding</keyword>
<reference key="1">
    <citation type="journal article" date="2006" name="Proc. Natl. Acad. Sci. U.S.A.">
        <title>The complete genome of Rhodococcus sp. RHA1 provides insights into a catabolic powerhouse.</title>
        <authorList>
            <person name="McLeod M.P."/>
            <person name="Warren R.L."/>
            <person name="Hsiao W.W.L."/>
            <person name="Araki N."/>
            <person name="Myhre M."/>
            <person name="Fernandes C."/>
            <person name="Miyazawa D."/>
            <person name="Wong W."/>
            <person name="Lillquist A.L."/>
            <person name="Wang D."/>
            <person name="Dosanjh M."/>
            <person name="Hara H."/>
            <person name="Petrescu A."/>
            <person name="Morin R.D."/>
            <person name="Yang G."/>
            <person name="Stott J.M."/>
            <person name="Schein J.E."/>
            <person name="Shin H."/>
            <person name="Smailus D."/>
            <person name="Siddiqui A.S."/>
            <person name="Marra M.A."/>
            <person name="Jones S.J.M."/>
            <person name="Holt R."/>
            <person name="Brinkman F.S.L."/>
            <person name="Miyauchi K."/>
            <person name="Fukuda M."/>
            <person name="Davies J.E."/>
            <person name="Mohn W.W."/>
            <person name="Eltis L.D."/>
        </authorList>
    </citation>
    <scope>NUCLEOTIDE SEQUENCE [LARGE SCALE GENOMIC DNA]</scope>
    <source>
        <strain>RHA1</strain>
    </source>
</reference>
<gene>
    <name evidence="1" type="primary">ruvA</name>
    <name type="ordered locus">RHA1_ro06893</name>
</gene>
<protein>
    <recommendedName>
        <fullName evidence="1">Holliday junction branch migration complex subunit RuvA</fullName>
    </recommendedName>
</protein>
<accession>Q0S1C7</accession>
<comment type="function">
    <text evidence="1">The RuvA-RuvB-RuvC complex processes Holliday junction (HJ) DNA during genetic recombination and DNA repair, while the RuvA-RuvB complex plays an important role in the rescue of blocked DNA replication forks via replication fork reversal (RFR). RuvA specifically binds to HJ cruciform DNA, conferring on it an open structure. The RuvB hexamer acts as an ATP-dependent pump, pulling dsDNA into and through the RuvAB complex. HJ branch migration allows RuvC to scan DNA until it finds its consensus sequence, where it cleaves and resolves the cruciform DNA.</text>
</comment>
<comment type="subunit">
    <text evidence="1">Homotetramer. Forms an RuvA(8)-RuvB(12)-Holliday junction (HJ) complex. HJ DNA is sandwiched between 2 RuvA tetramers; dsDNA enters through RuvA and exits via RuvB. An RuvB hexamer assembles on each DNA strand where it exits the tetramer. Each RuvB hexamer is contacted by two RuvA subunits (via domain III) on 2 adjacent RuvB subunits; this complex drives branch migration. In the full resolvosome a probable DNA-RuvA(4)-RuvB(12)-RuvC(2) complex forms which resolves the HJ.</text>
</comment>
<comment type="subcellular location">
    <subcellularLocation>
        <location evidence="1">Cytoplasm</location>
    </subcellularLocation>
</comment>
<comment type="domain">
    <text evidence="1">Has three domains with a flexible linker between the domains II and III and assumes an 'L' shape. Domain III is highly mobile and contacts RuvB.</text>
</comment>
<comment type="similarity">
    <text evidence="1">Belongs to the RuvA family.</text>
</comment>
<evidence type="ECO:0000255" key="1">
    <source>
        <dbReference type="HAMAP-Rule" id="MF_00031"/>
    </source>
</evidence>